<evidence type="ECO:0000250" key="1">
    <source>
        <dbReference type="UniProtKB" id="P07117"/>
    </source>
</evidence>
<evidence type="ECO:0000250" key="2">
    <source>
        <dbReference type="UniProtKB" id="Q2FWY7"/>
    </source>
</evidence>
<evidence type="ECO:0000255" key="3"/>
<evidence type="ECO:0000305" key="4"/>
<comment type="function">
    <text evidence="1 2">Catalyzes the sodium-dependent uptake of extracellular L-proline (By similarity). Since most S.aureus strains are L-proline auxotrophs, this transporter may aid the bacterial persistence during an infection of tissues with low proline concentrations (By similarity).</text>
</comment>
<comment type="catalytic activity">
    <reaction evidence="1">
        <text>L-proline(in) + Na(+)(in) = L-proline(out) + Na(+)(out)</text>
        <dbReference type="Rhea" id="RHEA:28967"/>
        <dbReference type="ChEBI" id="CHEBI:29101"/>
        <dbReference type="ChEBI" id="CHEBI:60039"/>
    </reaction>
</comment>
<comment type="subcellular location">
    <subcellularLocation>
        <location evidence="4">Cell membrane</location>
        <topology evidence="3">Multi-pass membrane protein</topology>
    </subcellularLocation>
</comment>
<comment type="similarity">
    <text evidence="4">Belongs to the sodium:solute symporter (SSF) (TC 2.A.21) family.</text>
</comment>
<gene>
    <name type="primary">putP</name>
    <name type="ordered locus">SAV1902</name>
</gene>
<feature type="chain" id="PRO_0000364099" description="Sodium/proline symporter">
    <location>
        <begin position="1"/>
        <end position="512"/>
    </location>
</feature>
<feature type="transmembrane region" description="Helical" evidence="3">
    <location>
        <begin position="16"/>
        <end position="36"/>
    </location>
</feature>
<feature type="transmembrane region" description="Helical" evidence="3">
    <location>
        <begin position="54"/>
        <end position="74"/>
    </location>
</feature>
<feature type="transmembrane region" description="Helical" evidence="3">
    <location>
        <begin position="85"/>
        <end position="105"/>
    </location>
</feature>
<feature type="transmembrane region" description="Helical" evidence="3">
    <location>
        <begin position="139"/>
        <end position="159"/>
    </location>
</feature>
<feature type="transmembrane region" description="Helical" evidence="3">
    <location>
        <begin position="174"/>
        <end position="194"/>
    </location>
</feature>
<feature type="transmembrane region" description="Helical" evidence="3">
    <location>
        <begin position="200"/>
        <end position="220"/>
    </location>
</feature>
<feature type="transmembrane region" description="Helical" evidence="3">
    <location>
        <begin position="240"/>
        <end position="260"/>
    </location>
</feature>
<feature type="transmembrane region" description="Helical" evidence="3">
    <location>
        <begin position="286"/>
        <end position="306"/>
    </location>
</feature>
<feature type="transmembrane region" description="Helical" evidence="3">
    <location>
        <begin position="327"/>
        <end position="347"/>
    </location>
</feature>
<feature type="transmembrane region" description="Helical" evidence="3">
    <location>
        <begin position="381"/>
        <end position="401"/>
    </location>
</feature>
<feature type="transmembrane region" description="Helical" evidence="3">
    <location>
        <begin position="410"/>
        <end position="430"/>
    </location>
</feature>
<feature type="transmembrane region" description="Helical" evidence="3">
    <location>
        <begin position="438"/>
        <end position="458"/>
    </location>
</feature>
<feature type="transmembrane region" description="Helical" evidence="3">
    <location>
        <begin position="467"/>
        <end position="487"/>
    </location>
</feature>
<dbReference type="EMBL" id="BA000017">
    <property type="protein sequence ID" value="BAB58064.1"/>
    <property type="molecule type" value="Genomic_DNA"/>
</dbReference>
<dbReference type="RefSeq" id="WP_000957020.1">
    <property type="nucleotide sequence ID" value="NC_002758.2"/>
</dbReference>
<dbReference type="SMR" id="Q99SY5"/>
<dbReference type="KEGG" id="sav:SAV1902"/>
<dbReference type="HOGENOM" id="CLU_018808_15_2_9"/>
<dbReference type="PhylomeDB" id="Q99SY5"/>
<dbReference type="Proteomes" id="UP000002481">
    <property type="component" value="Chromosome"/>
</dbReference>
<dbReference type="GO" id="GO:0005886">
    <property type="term" value="C:plasma membrane"/>
    <property type="evidence" value="ECO:0007669"/>
    <property type="project" value="UniProtKB-SubCell"/>
</dbReference>
<dbReference type="GO" id="GO:0015193">
    <property type="term" value="F:L-proline transmembrane transporter activity"/>
    <property type="evidence" value="ECO:0007669"/>
    <property type="project" value="TreeGrafter"/>
</dbReference>
<dbReference type="GO" id="GO:0005298">
    <property type="term" value="F:proline:sodium symporter activity"/>
    <property type="evidence" value="ECO:0007669"/>
    <property type="project" value="InterPro"/>
</dbReference>
<dbReference type="GO" id="GO:0031402">
    <property type="term" value="F:sodium ion binding"/>
    <property type="evidence" value="ECO:0007669"/>
    <property type="project" value="InterPro"/>
</dbReference>
<dbReference type="GO" id="GO:0015824">
    <property type="term" value="P:proline transport"/>
    <property type="evidence" value="ECO:0007669"/>
    <property type="project" value="InterPro"/>
</dbReference>
<dbReference type="CDD" id="cd11475">
    <property type="entry name" value="SLC5sbd_PutP"/>
    <property type="match status" value="1"/>
</dbReference>
<dbReference type="FunFam" id="1.20.1730.10:FF:000002">
    <property type="entry name" value="Sodium/proline symporter"/>
    <property type="match status" value="1"/>
</dbReference>
<dbReference type="Gene3D" id="1.20.1730.10">
    <property type="entry name" value="Sodium/glucose cotransporter"/>
    <property type="match status" value="1"/>
</dbReference>
<dbReference type="InterPro" id="IPR038377">
    <property type="entry name" value="Na/Glc_symporter_sf"/>
</dbReference>
<dbReference type="InterPro" id="IPR011851">
    <property type="entry name" value="Na/Pro_symporter"/>
</dbReference>
<dbReference type="InterPro" id="IPR001734">
    <property type="entry name" value="Na/solute_symporter"/>
</dbReference>
<dbReference type="InterPro" id="IPR050277">
    <property type="entry name" value="Sodium:Solute_Symporter"/>
</dbReference>
<dbReference type="NCBIfam" id="TIGR02121">
    <property type="entry name" value="Na_Pro_sym"/>
    <property type="match status" value="1"/>
</dbReference>
<dbReference type="NCBIfam" id="TIGR00813">
    <property type="entry name" value="sss"/>
    <property type="match status" value="1"/>
</dbReference>
<dbReference type="PANTHER" id="PTHR48086">
    <property type="entry name" value="SODIUM/PROLINE SYMPORTER-RELATED"/>
    <property type="match status" value="1"/>
</dbReference>
<dbReference type="PANTHER" id="PTHR48086:SF3">
    <property type="entry name" value="SODIUM_PROLINE SYMPORTER"/>
    <property type="match status" value="1"/>
</dbReference>
<dbReference type="Pfam" id="PF00474">
    <property type="entry name" value="SSF"/>
    <property type="match status" value="1"/>
</dbReference>
<dbReference type="PROSITE" id="PS50283">
    <property type="entry name" value="NA_SOLUT_SYMP_3"/>
    <property type="match status" value="1"/>
</dbReference>
<accession>Q99SY5</accession>
<sequence>MLTMGTALSQQVDANWQTYIMIAVYFLILIVIGFYGYKQATGNLSEYMLGGRSIGPYITALSAGASDMSGWMIMGLPGSVYSTGLSAMWITIGLTLGAYINYFVVAPRLRVYTELAGDAITLPDFFKNRLNDKNNVLKIISGLIIVVFFTLYTHSGFVSGGKLFESAFGLDYHFGLILVAFIVIFYTFFGGYLAVSITDFFQGVIMLIAMVMVPIVAMMNLNGWGTFHDVAAMKPTNLNLFKGLSFIGIISLFSWGLGYFGQPHIIVRFMSIKSHKMLPKARRLGISWMAVGLLGAVAVGLTGIAFVPAYHIKLEDPETLFIVMSQVLFHPLVGGFLLAAILAAIMSTISSQLLVTSSSLTEDFYKLIRGEEKAKTHQKEFVMIGRLSVLVVAIVAIAIAWNPNDTILNLVGNAWAGFGASFSPLVLFALYWKGLTRAGAVSGMVSGALVVIVWIAWIKPLAHINEIFGLYEIIPGFIVSVIVTYVVSKLTKKPGAFVETDLNKVRDIVREK</sequence>
<reference key="1">
    <citation type="journal article" date="2001" name="Lancet">
        <title>Whole genome sequencing of meticillin-resistant Staphylococcus aureus.</title>
        <authorList>
            <person name="Kuroda M."/>
            <person name="Ohta T."/>
            <person name="Uchiyama I."/>
            <person name="Baba T."/>
            <person name="Yuzawa H."/>
            <person name="Kobayashi I."/>
            <person name="Cui L."/>
            <person name="Oguchi A."/>
            <person name="Aoki K."/>
            <person name="Nagai Y."/>
            <person name="Lian J.-Q."/>
            <person name="Ito T."/>
            <person name="Kanamori M."/>
            <person name="Matsumaru H."/>
            <person name="Maruyama A."/>
            <person name="Murakami H."/>
            <person name="Hosoyama A."/>
            <person name="Mizutani-Ui Y."/>
            <person name="Takahashi N.K."/>
            <person name="Sawano T."/>
            <person name="Inoue R."/>
            <person name="Kaito C."/>
            <person name="Sekimizu K."/>
            <person name="Hirakawa H."/>
            <person name="Kuhara S."/>
            <person name="Goto S."/>
            <person name="Yabuzaki J."/>
            <person name="Kanehisa M."/>
            <person name="Yamashita A."/>
            <person name="Oshima K."/>
            <person name="Furuya K."/>
            <person name="Yoshino C."/>
            <person name="Shiba T."/>
            <person name="Hattori M."/>
            <person name="Ogasawara N."/>
            <person name="Hayashi H."/>
            <person name="Hiramatsu K."/>
        </authorList>
    </citation>
    <scope>NUCLEOTIDE SEQUENCE [LARGE SCALE GENOMIC DNA]</scope>
    <source>
        <strain>Mu50 / ATCC 700699</strain>
    </source>
</reference>
<keyword id="KW-0029">Amino-acid transport</keyword>
<keyword id="KW-1003">Cell membrane</keyword>
<keyword id="KW-0406">Ion transport</keyword>
<keyword id="KW-0472">Membrane</keyword>
<keyword id="KW-0915">Sodium</keyword>
<keyword id="KW-0739">Sodium transport</keyword>
<keyword id="KW-0769">Symport</keyword>
<keyword id="KW-0812">Transmembrane</keyword>
<keyword id="KW-1133">Transmembrane helix</keyword>
<keyword id="KW-0813">Transport</keyword>
<name>PUTP_STAAM</name>
<protein>
    <recommendedName>
        <fullName>Sodium/proline symporter</fullName>
    </recommendedName>
    <alternativeName>
        <fullName>Proline permease</fullName>
    </alternativeName>
</protein>
<organism>
    <name type="scientific">Staphylococcus aureus (strain Mu50 / ATCC 700699)</name>
    <dbReference type="NCBI Taxonomy" id="158878"/>
    <lineage>
        <taxon>Bacteria</taxon>
        <taxon>Bacillati</taxon>
        <taxon>Bacillota</taxon>
        <taxon>Bacilli</taxon>
        <taxon>Bacillales</taxon>
        <taxon>Staphylococcaceae</taxon>
        <taxon>Staphylococcus</taxon>
    </lineage>
</organism>
<proteinExistence type="inferred from homology"/>